<reference key="1">
    <citation type="journal article" date="2003" name="Gene">
        <title>Apicoplast genome of the coccidian Eimeria tenella.</title>
        <authorList>
            <person name="Cai X."/>
            <person name="Fuller A.L."/>
            <person name="McDougald L.R."/>
            <person name="Zhu G."/>
        </authorList>
    </citation>
    <scope>NUCLEOTIDE SEQUENCE [LARGE SCALE GENOMIC DNA]</scope>
    <source>
        <strain>Penn State</strain>
    </source>
</reference>
<name>RR4_EIMTE</name>
<sequence length="200" mass="24268">MLRYLGPKLKKLKRLNIHMQPEFSTKYFILNTNKYNNKMILSFYLLELFEKQKLKFTFSLSEKIIKKYILFMHKYNYKKFNLINIIEIRLDNTIFNLGYSITIAQAKQLIIHGYFFVNFKLIKIPSFLLKKGDIITLSPKSYYIFKLCKKNLYKKYIKNSNIYDTIYICKNTLISIIYSILNIYNNNNYNNILIMKYYSY</sequence>
<keyword id="KW-0933">Apicoplast</keyword>
<keyword id="KW-0934">Plastid</keyword>
<keyword id="KW-0687">Ribonucleoprotein</keyword>
<keyword id="KW-0689">Ribosomal protein</keyword>
<keyword id="KW-0694">RNA-binding</keyword>
<keyword id="KW-0699">rRNA-binding</keyword>
<evidence type="ECO:0000250" key="1"/>
<evidence type="ECO:0000255" key="2">
    <source>
        <dbReference type="PROSITE-ProRule" id="PRU00182"/>
    </source>
</evidence>
<evidence type="ECO:0000305" key="3"/>
<protein>
    <recommendedName>
        <fullName evidence="3">Small ribosomal subunit protein uS4c</fullName>
    </recommendedName>
    <alternativeName>
        <fullName>Apicoplast 30S ribosomal protein S4</fullName>
    </alternativeName>
</protein>
<dbReference type="EMBL" id="AY217738">
    <property type="protein sequence ID" value="AAO40222.1"/>
    <property type="molecule type" value="Genomic_DNA"/>
</dbReference>
<dbReference type="RefSeq" id="NP_852621.1">
    <property type="nucleotide sequence ID" value="NC_004823.1"/>
</dbReference>
<dbReference type="SMR" id="Q7YN81"/>
<dbReference type="GeneID" id="1263677"/>
<dbReference type="VEuPathDB" id="ToxoDB:ETH2_API01100"/>
<dbReference type="GO" id="GO:0020011">
    <property type="term" value="C:apicoplast"/>
    <property type="evidence" value="ECO:0007669"/>
    <property type="project" value="UniProtKB-SubCell"/>
</dbReference>
<dbReference type="GO" id="GO:0015935">
    <property type="term" value="C:small ribosomal subunit"/>
    <property type="evidence" value="ECO:0007669"/>
    <property type="project" value="TreeGrafter"/>
</dbReference>
<dbReference type="GO" id="GO:0019843">
    <property type="term" value="F:rRNA binding"/>
    <property type="evidence" value="ECO:0007669"/>
    <property type="project" value="UniProtKB-KW"/>
</dbReference>
<dbReference type="GO" id="GO:0003735">
    <property type="term" value="F:structural constituent of ribosome"/>
    <property type="evidence" value="ECO:0007669"/>
    <property type="project" value="TreeGrafter"/>
</dbReference>
<dbReference type="GO" id="GO:0042274">
    <property type="term" value="P:ribosomal small subunit biogenesis"/>
    <property type="evidence" value="ECO:0007669"/>
    <property type="project" value="TreeGrafter"/>
</dbReference>
<dbReference type="CDD" id="cd00165">
    <property type="entry name" value="S4"/>
    <property type="match status" value="1"/>
</dbReference>
<dbReference type="Gene3D" id="1.10.1050.10">
    <property type="entry name" value="Ribosomal Protein S4 Delta 41, Chain A, domain 1"/>
    <property type="match status" value="1"/>
</dbReference>
<dbReference type="Gene3D" id="3.10.290.10">
    <property type="entry name" value="RNA-binding S4 domain"/>
    <property type="match status" value="1"/>
</dbReference>
<dbReference type="InterPro" id="IPR022801">
    <property type="entry name" value="Ribosomal_uS4"/>
</dbReference>
<dbReference type="InterPro" id="IPR001912">
    <property type="entry name" value="Ribosomal_uS4_N"/>
</dbReference>
<dbReference type="InterPro" id="IPR002942">
    <property type="entry name" value="S4_RNA-bd"/>
</dbReference>
<dbReference type="InterPro" id="IPR036986">
    <property type="entry name" value="S4_RNA-bd_sf"/>
</dbReference>
<dbReference type="PANTHER" id="PTHR11831">
    <property type="entry name" value="30S 40S RIBOSOMAL PROTEIN"/>
    <property type="match status" value="1"/>
</dbReference>
<dbReference type="PANTHER" id="PTHR11831:SF4">
    <property type="entry name" value="SMALL RIBOSOMAL SUBUNIT PROTEIN US4M"/>
    <property type="match status" value="1"/>
</dbReference>
<dbReference type="Pfam" id="PF00163">
    <property type="entry name" value="Ribosomal_S4"/>
    <property type="match status" value="1"/>
</dbReference>
<dbReference type="Pfam" id="PF01479">
    <property type="entry name" value="S4"/>
    <property type="match status" value="1"/>
</dbReference>
<dbReference type="SMART" id="SM00363">
    <property type="entry name" value="S4"/>
    <property type="match status" value="1"/>
</dbReference>
<dbReference type="SUPFAM" id="SSF55174">
    <property type="entry name" value="Alpha-L RNA-binding motif"/>
    <property type="match status" value="1"/>
</dbReference>
<dbReference type="PROSITE" id="PS50889">
    <property type="entry name" value="S4"/>
    <property type="match status" value="1"/>
</dbReference>
<feature type="chain" id="PRO_0000293438" description="Small ribosomal subunit protein uS4c">
    <location>
        <begin position="1"/>
        <end position="200"/>
    </location>
</feature>
<feature type="domain" description="S4 RNA-binding" evidence="2">
    <location>
        <begin position="88"/>
        <end position="148"/>
    </location>
</feature>
<organism>
    <name type="scientific">Eimeria tenella</name>
    <name type="common">Coccidian parasite</name>
    <dbReference type="NCBI Taxonomy" id="5802"/>
    <lineage>
        <taxon>Eukaryota</taxon>
        <taxon>Sar</taxon>
        <taxon>Alveolata</taxon>
        <taxon>Apicomplexa</taxon>
        <taxon>Conoidasida</taxon>
        <taxon>Coccidia</taxon>
        <taxon>Eucoccidiorida</taxon>
        <taxon>Eimeriorina</taxon>
        <taxon>Eimeriidae</taxon>
        <taxon>Eimeria</taxon>
    </lineage>
</organism>
<proteinExistence type="inferred from homology"/>
<geneLocation type="apicoplast"/>
<gene>
    <name type="primary">rps4</name>
</gene>
<comment type="function">
    <text evidence="1">One of the primary rRNA binding proteins, it binds directly to 16S rRNA where it nucleates assembly of the body of the 30S subunit.</text>
</comment>
<comment type="subunit">
    <text evidence="1">Part of the 30S ribosomal subunit.</text>
</comment>
<comment type="subcellular location">
    <subcellularLocation>
        <location>Plastid</location>
        <location>Apicoplast</location>
    </subcellularLocation>
</comment>
<comment type="similarity">
    <text evidence="3">Belongs to the universal ribosomal protein uS4 family.</text>
</comment>
<accession>Q7YN81</accession>